<accession>Q00853</accession>
<accession>Q6J2L4</accession>
<organism>
    <name type="scientific">Clostridium pasteurianum</name>
    <dbReference type="NCBI Taxonomy" id="1501"/>
    <lineage>
        <taxon>Bacteria</taxon>
        <taxon>Bacillati</taxon>
        <taxon>Bacillota</taxon>
        <taxon>Clostridia</taxon>
        <taxon>Eubacteriales</taxon>
        <taxon>Clostridiaceae</taxon>
        <taxon>Clostridium</taxon>
    </lineage>
</organism>
<comment type="function">
    <text>This protein is a Fe-Mo-cofactor biosynthetic component.</text>
</comment>
<comment type="catalytic activity">
    <reaction>
        <text>acetyl-CoA + 2-oxoglutarate + H2O = (2R)-homocitrate + CoA + H(+)</text>
        <dbReference type="Rhea" id="RHEA:12929"/>
        <dbReference type="ChEBI" id="CHEBI:15377"/>
        <dbReference type="ChEBI" id="CHEBI:15378"/>
        <dbReference type="ChEBI" id="CHEBI:16810"/>
        <dbReference type="ChEBI" id="CHEBI:57287"/>
        <dbReference type="ChEBI" id="CHEBI:57288"/>
        <dbReference type="ChEBI" id="CHEBI:58884"/>
        <dbReference type="EC" id="2.3.3.14"/>
    </reaction>
</comment>
<comment type="subunit">
    <text>Heterodimer of an alpha and an omega chain.</text>
</comment>
<comment type="miscellaneous">
    <text>In Clostridium pasteurianum the N-terminal and C-terminal portions of NifV are encoded by two different genes, nifV-alpha and nifV-omega.</text>
</comment>
<comment type="similarity">
    <text evidence="2">Belongs to the alpha-IPM synthase/homocitrate synthase family.</text>
</comment>
<protein>
    <recommendedName>
        <fullName>Homocitrate synthase subunit alpha</fullName>
        <ecNumber>2.3.3.14</ecNumber>
    </recommendedName>
</protein>
<sequence>MGINIVDTTLRDGEQKAGIALSVQDKVEIAKIISEMGVHQIEAGIPAMGGDEKISVSKIAALGLPSKIAAWNRMSTKDIDTSIECGVDIVHISSPVSDLQIKTKLEKDRKWVAENLKRTVIYALEKDCEVTVGLEDSSRADLNFLIQLCEMIFALGVKRVRYADTVGIMEPKELYSQIKKIRDKVPIDIEIHVHNDFGMAISNSFAAFKAGAKFADCTITGMGERAGNCDFLKFVKVIQELTGEKIYTGDFEDIIEKENEIKKILRLNW</sequence>
<feature type="chain" id="PRO_0000140467" description="Homocitrate synthase subunit alpha">
    <location>
        <begin position="1"/>
        <end position="269"/>
    </location>
</feature>
<feature type="domain" description="Pyruvate carboxyltransferase" evidence="1">
    <location>
        <begin position="3"/>
        <end position="255"/>
    </location>
</feature>
<keyword id="KW-0535">Nitrogen fixation</keyword>
<keyword id="KW-0808">Transferase</keyword>
<reference key="1">
    <citation type="journal article" date="1991" name="J. Bacteriol.">
        <title>The N-terminal and C-terminal portions of NifV are encoded by two different genes in Clostridium pasteurianum.</title>
        <authorList>
            <person name="Wang S.-Z."/>
            <person name="Dean D.R."/>
            <person name="Chen J.-S."/>
            <person name="Johnson J.L."/>
        </authorList>
    </citation>
    <scope>NUCLEOTIDE SEQUENCE [GENOMIC DNA]</scope>
</reference>
<dbReference type="EC" id="2.3.3.14"/>
<dbReference type="EMBL" id="AY603957">
    <property type="protein sequence ID" value="AAT37650.1"/>
    <property type="molecule type" value="Genomic_DNA"/>
</dbReference>
<dbReference type="PIR" id="B39403">
    <property type="entry name" value="B39403"/>
</dbReference>
<dbReference type="RefSeq" id="WP_003447856.1">
    <property type="nucleotide sequence ID" value="NZ_CP112872.1"/>
</dbReference>
<dbReference type="SMR" id="Q00853"/>
<dbReference type="OrthoDB" id="9804858at2"/>
<dbReference type="GO" id="GO:0004410">
    <property type="term" value="F:homocitrate synthase activity"/>
    <property type="evidence" value="ECO:0007669"/>
    <property type="project" value="UniProtKB-EC"/>
</dbReference>
<dbReference type="GO" id="GO:0009058">
    <property type="term" value="P:biosynthetic process"/>
    <property type="evidence" value="ECO:0007669"/>
    <property type="project" value="UniProtKB-ARBA"/>
</dbReference>
<dbReference type="GO" id="GO:0019752">
    <property type="term" value="P:carboxylic acid metabolic process"/>
    <property type="evidence" value="ECO:0007669"/>
    <property type="project" value="InterPro"/>
</dbReference>
<dbReference type="GO" id="GO:0009399">
    <property type="term" value="P:nitrogen fixation"/>
    <property type="evidence" value="ECO:0007669"/>
    <property type="project" value="UniProtKB-KW"/>
</dbReference>
<dbReference type="Gene3D" id="3.20.20.70">
    <property type="entry name" value="Aldolase class I"/>
    <property type="match status" value="1"/>
</dbReference>
<dbReference type="InterPro" id="IPR002034">
    <property type="entry name" value="AIPM/Hcit_synth_CS"/>
</dbReference>
<dbReference type="InterPro" id="IPR013785">
    <property type="entry name" value="Aldolase_TIM"/>
</dbReference>
<dbReference type="InterPro" id="IPR000891">
    <property type="entry name" value="PYR_CT"/>
</dbReference>
<dbReference type="PANTHER" id="PTHR42880">
    <property type="entry name" value="HOMOCITRATE SYNTHASE"/>
    <property type="match status" value="1"/>
</dbReference>
<dbReference type="PANTHER" id="PTHR42880:SF1">
    <property type="entry name" value="ISOPROPYLMALATE_HOMOCITRATE_CITRAMALATE SYNTHASE FAMILY PROTEIN"/>
    <property type="match status" value="1"/>
</dbReference>
<dbReference type="Pfam" id="PF00682">
    <property type="entry name" value="HMGL-like"/>
    <property type="match status" value="1"/>
</dbReference>
<dbReference type="SUPFAM" id="SSF51569">
    <property type="entry name" value="Aldolase"/>
    <property type="match status" value="1"/>
</dbReference>
<dbReference type="PROSITE" id="PS00815">
    <property type="entry name" value="AIPM_HOMOCIT_SYNTH_1"/>
    <property type="match status" value="1"/>
</dbReference>
<dbReference type="PROSITE" id="PS00816">
    <property type="entry name" value="AIPM_HOMOCIT_SYNTH_2"/>
    <property type="match status" value="1"/>
</dbReference>
<dbReference type="PROSITE" id="PS50991">
    <property type="entry name" value="PYR_CT"/>
    <property type="match status" value="1"/>
</dbReference>
<name>NIFVA_CLOPA</name>
<gene>
    <name type="primary">nifV-ALPHA</name>
</gene>
<proteinExistence type="inferred from homology"/>
<evidence type="ECO:0000255" key="1">
    <source>
        <dbReference type="PROSITE-ProRule" id="PRU01151"/>
    </source>
</evidence>
<evidence type="ECO:0000305" key="2"/>